<accession>A1KUQ1</accession>
<comment type="function">
    <text evidence="1">Involved in the third step of the chorismate pathway, which leads to the biosynthesis of aromatic amino acids. Catalyzes the cis-dehydration of 3-dehydroquinate (DHQ) and introduces the first double bond of the aromatic ring to yield 3-dehydroshikimate.</text>
</comment>
<comment type="catalytic activity">
    <reaction evidence="1">
        <text>3-dehydroquinate = 3-dehydroshikimate + H2O</text>
        <dbReference type="Rhea" id="RHEA:21096"/>
        <dbReference type="ChEBI" id="CHEBI:15377"/>
        <dbReference type="ChEBI" id="CHEBI:16630"/>
        <dbReference type="ChEBI" id="CHEBI:32364"/>
        <dbReference type="EC" id="4.2.1.10"/>
    </reaction>
</comment>
<comment type="pathway">
    <text evidence="1">Metabolic intermediate biosynthesis; chorismate biosynthesis; chorismate from D-erythrose 4-phosphate and phosphoenolpyruvate: step 3/7.</text>
</comment>
<comment type="subunit">
    <text evidence="1">Homodimer.</text>
</comment>
<comment type="similarity">
    <text evidence="1">Belongs to the type-I 3-dehydroquinase family.</text>
</comment>
<comment type="sequence caution" evidence="2">
    <conflict type="erroneous initiation">
        <sequence resource="EMBL-CDS" id="CAM10599"/>
    </conflict>
    <text>Extended N-terminus.</text>
</comment>
<gene>
    <name evidence="1" type="primary">aroD</name>
    <name type="ordered locus">NMC1383</name>
</gene>
<protein>
    <recommendedName>
        <fullName evidence="1">3-dehydroquinate dehydratase</fullName>
        <shortName evidence="1">3-dehydroquinase</shortName>
        <ecNumber evidence="1">4.2.1.10</ecNumber>
    </recommendedName>
    <alternativeName>
        <fullName evidence="1">Type I DHQase</fullName>
    </alternativeName>
    <alternativeName>
        <fullName evidence="1">Type I dehydroquinase</fullName>
        <shortName evidence="1">DHQ1</shortName>
    </alternativeName>
</protein>
<dbReference type="EC" id="4.2.1.10" evidence="1"/>
<dbReference type="EMBL" id="AM421808">
    <property type="protein sequence ID" value="CAM10599.1"/>
    <property type="status" value="ALT_INIT"/>
    <property type="molecule type" value="Genomic_DNA"/>
</dbReference>
<dbReference type="RefSeq" id="WP_002224578.1">
    <property type="nucleotide sequence ID" value="NC_008767.1"/>
</dbReference>
<dbReference type="SMR" id="A1KUQ1"/>
<dbReference type="KEGG" id="nmc:NMC1383"/>
<dbReference type="HOGENOM" id="CLU_064444_0_0_4"/>
<dbReference type="UniPathway" id="UPA00053">
    <property type="reaction ID" value="UER00086"/>
</dbReference>
<dbReference type="Proteomes" id="UP000002286">
    <property type="component" value="Chromosome"/>
</dbReference>
<dbReference type="GO" id="GO:0003855">
    <property type="term" value="F:3-dehydroquinate dehydratase activity"/>
    <property type="evidence" value="ECO:0007669"/>
    <property type="project" value="UniProtKB-UniRule"/>
</dbReference>
<dbReference type="GO" id="GO:0046279">
    <property type="term" value="P:3,4-dihydroxybenzoate biosynthetic process"/>
    <property type="evidence" value="ECO:0007669"/>
    <property type="project" value="TreeGrafter"/>
</dbReference>
<dbReference type="GO" id="GO:0008652">
    <property type="term" value="P:amino acid biosynthetic process"/>
    <property type="evidence" value="ECO:0007669"/>
    <property type="project" value="UniProtKB-KW"/>
</dbReference>
<dbReference type="GO" id="GO:0009073">
    <property type="term" value="P:aromatic amino acid family biosynthetic process"/>
    <property type="evidence" value="ECO:0007669"/>
    <property type="project" value="UniProtKB-KW"/>
</dbReference>
<dbReference type="GO" id="GO:0009423">
    <property type="term" value="P:chorismate biosynthetic process"/>
    <property type="evidence" value="ECO:0007669"/>
    <property type="project" value="UniProtKB-UniRule"/>
</dbReference>
<dbReference type="CDD" id="cd00502">
    <property type="entry name" value="DHQase_I"/>
    <property type="match status" value="1"/>
</dbReference>
<dbReference type="FunFam" id="3.20.20.70:FF:000047">
    <property type="entry name" value="3-dehydroquinate dehydratase"/>
    <property type="match status" value="1"/>
</dbReference>
<dbReference type="Gene3D" id="3.20.20.70">
    <property type="entry name" value="Aldolase class I"/>
    <property type="match status" value="1"/>
</dbReference>
<dbReference type="HAMAP" id="MF_00214">
    <property type="entry name" value="AroD"/>
    <property type="match status" value="1"/>
</dbReference>
<dbReference type="InterPro" id="IPR013785">
    <property type="entry name" value="Aldolase_TIM"/>
</dbReference>
<dbReference type="InterPro" id="IPR001381">
    <property type="entry name" value="DHquinase_I"/>
</dbReference>
<dbReference type="InterPro" id="IPR050146">
    <property type="entry name" value="Type-I_3-dehydroquinase"/>
</dbReference>
<dbReference type="NCBIfam" id="TIGR01093">
    <property type="entry name" value="aroD"/>
    <property type="match status" value="1"/>
</dbReference>
<dbReference type="PANTHER" id="PTHR43699">
    <property type="entry name" value="3-DEHYDROQUINATE DEHYDRATASE"/>
    <property type="match status" value="1"/>
</dbReference>
<dbReference type="PANTHER" id="PTHR43699:SF1">
    <property type="entry name" value="3-DEHYDROQUINATE DEHYDRATASE"/>
    <property type="match status" value="1"/>
</dbReference>
<dbReference type="Pfam" id="PF01487">
    <property type="entry name" value="DHquinase_I"/>
    <property type="match status" value="1"/>
</dbReference>
<dbReference type="SUPFAM" id="SSF51569">
    <property type="entry name" value="Aldolase"/>
    <property type="match status" value="1"/>
</dbReference>
<sequence length="254" mass="27238">MCSCLVVKNTVIGSGRTKIAVPLVARDAAELSAVLEQIKNMPFDIAEFRADFLECAGSIGEILHHTQTVRDALPDKPLLFTFRRHGEGGSFPCSDDYYFKLLDALIESRLPDIIDIELFSGETAVRRAVANAQKNGIAALLCNHEFHRTPPQEEIVCRLKQMEDCGADICKIAVMPQSAEDVLTLLSATLKAKELAAKPIVTMSMGQTGAVSRLAGQVFGSSITFGSGTQNSAPGQIGVSALRATLDCLENGAD</sequence>
<evidence type="ECO:0000255" key="1">
    <source>
        <dbReference type="HAMAP-Rule" id="MF_00214"/>
    </source>
</evidence>
<evidence type="ECO:0000305" key="2"/>
<proteinExistence type="inferred from homology"/>
<keyword id="KW-0028">Amino-acid biosynthesis</keyword>
<keyword id="KW-0057">Aromatic amino acid biosynthesis</keyword>
<keyword id="KW-0456">Lyase</keyword>
<keyword id="KW-0704">Schiff base</keyword>
<feature type="chain" id="PRO_0000325528" description="3-dehydroquinate dehydratase">
    <location>
        <begin position="1"/>
        <end position="254"/>
    </location>
</feature>
<feature type="active site" description="Proton donor/acceptor" evidence="1">
    <location>
        <position position="144"/>
    </location>
</feature>
<feature type="active site" description="Schiff-base intermediate with substrate" evidence="1">
    <location>
        <position position="171"/>
    </location>
</feature>
<feature type="binding site" evidence="1">
    <location>
        <begin position="47"/>
        <end position="49"/>
    </location>
    <ligand>
        <name>3-dehydroquinate</name>
        <dbReference type="ChEBI" id="CHEBI:32364"/>
    </ligand>
</feature>
<feature type="binding site" evidence="1">
    <location>
        <position position="83"/>
    </location>
    <ligand>
        <name>3-dehydroquinate</name>
        <dbReference type="ChEBI" id="CHEBI:32364"/>
    </ligand>
</feature>
<feature type="binding site" evidence="1">
    <location>
        <position position="213"/>
    </location>
    <ligand>
        <name>3-dehydroquinate</name>
        <dbReference type="ChEBI" id="CHEBI:32364"/>
    </ligand>
</feature>
<feature type="binding site" evidence="1">
    <location>
        <position position="232"/>
    </location>
    <ligand>
        <name>3-dehydroquinate</name>
        <dbReference type="ChEBI" id="CHEBI:32364"/>
    </ligand>
</feature>
<feature type="binding site" evidence="1">
    <location>
        <position position="236"/>
    </location>
    <ligand>
        <name>3-dehydroquinate</name>
        <dbReference type="ChEBI" id="CHEBI:32364"/>
    </ligand>
</feature>
<name>AROD_NEIMF</name>
<organism>
    <name type="scientific">Neisseria meningitidis serogroup C / serotype 2a (strain ATCC 700532 / DSM 15464 / FAM18)</name>
    <dbReference type="NCBI Taxonomy" id="272831"/>
    <lineage>
        <taxon>Bacteria</taxon>
        <taxon>Pseudomonadati</taxon>
        <taxon>Pseudomonadota</taxon>
        <taxon>Betaproteobacteria</taxon>
        <taxon>Neisseriales</taxon>
        <taxon>Neisseriaceae</taxon>
        <taxon>Neisseria</taxon>
    </lineage>
</organism>
<reference key="1">
    <citation type="journal article" date="2007" name="PLoS Genet.">
        <title>Meningococcal genetic variation mechanisms viewed through comparative analysis of serogroup C strain FAM18.</title>
        <authorList>
            <person name="Bentley S.D."/>
            <person name="Vernikos G.S."/>
            <person name="Snyder L.A.S."/>
            <person name="Churcher C."/>
            <person name="Arrowsmith C."/>
            <person name="Chillingworth T."/>
            <person name="Cronin A."/>
            <person name="Davis P.H."/>
            <person name="Holroyd N.E."/>
            <person name="Jagels K."/>
            <person name="Maddison M."/>
            <person name="Moule S."/>
            <person name="Rabbinowitsch E."/>
            <person name="Sharp S."/>
            <person name="Unwin L."/>
            <person name="Whitehead S."/>
            <person name="Quail M.A."/>
            <person name="Achtman M."/>
            <person name="Barrell B.G."/>
            <person name="Saunders N.J."/>
            <person name="Parkhill J."/>
        </authorList>
    </citation>
    <scope>NUCLEOTIDE SEQUENCE [LARGE SCALE GENOMIC DNA]</scope>
    <source>
        <strain>ATCC 700532 / DSM 15464 / FAM18</strain>
    </source>
</reference>